<protein>
    <recommendedName>
        <fullName evidence="4">Aquaporin-1</fullName>
    </recommendedName>
</protein>
<keyword id="KW-0472">Membrane</keyword>
<keyword id="KW-1185">Reference proteome</keyword>
<keyword id="KW-0677">Repeat</keyword>
<keyword id="KW-0812">Transmembrane</keyword>
<keyword id="KW-1133">Transmembrane helix</keyword>
<keyword id="KW-0813">Transport</keyword>
<reference key="1">
    <citation type="journal article" date="2011" name="PLoS Genet.">
        <title>Genomic analysis of the necrotrophic fungal pathogens Sclerotinia sclerotiorum and Botrytis cinerea.</title>
        <authorList>
            <person name="Amselem J."/>
            <person name="Cuomo C.A."/>
            <person name="van Kan J.A.L."/>
            <person name="Viaud M."/>
            <person name="Benito E.P."/>
            <person name="Couloux A."/>
            <person name="Coutinho P.M."/>
            <person name="de Vries R.P."/>
            <person name="Dyer P.S."/>
            <person name="Fillinger S."/>
            <person name="Fournier E."/>
            <person name="Gout L."/>
            <person name="Hahn M."/>
            <person name="Kohn L."/>
            <person name="Lapalu N."/>
            <person name="Plummer K.M."/>
            <person name="Pradier J.-M."/>
            <person name="Quevillon E."/>
            <person name="Sharon A."/>
            <person name="Simon A."/>
            <person name="ten Have A."/>
            <person name="Tudzynski B."/>
            <person name="Tudzynski P."/>
            <person name="Wincker P."/>
            <person name="Andrew M."/>
            <person name="Anthouard V."/>
            <person name="Beever R.E."/>
            <person name="Beffa R."/>
            <person name="Benoit I."/>
            <person name="Bouzid O."/>
            <person name="Brault B."/>
            <person name="Chen Z."/>
            <person name="Choquer M."/>
            <person name="Collemare J."/>
            <person name="Cotton P."/>
            <person name="Danchin E.G."/>
            <person name="Da Silva C."/>
            <person name="Gautier A."/>
            <person name="Giraud C."/>
            <person name="Giraud T."/>
            <person name="Gonzalez C."/>
            <person name="Grossetete S."/>
            <person name="Gueldener U."/>
            <person name="Henrissat B."/>
            <person name="Howlett B.J."/>
            <person name="Kodira C."/>
            <person name="Kretschmer M."/>
            <person name="Lappartient A."/>
            <person name="Leroch M."/>
            <person name="Levis C."/>
            <person name="Mauceli E."/>
            <person name="Neuveglise C."/>
            <person name="Oeser B."/>
            <person name="Pearson M."/>
            <person name="Poulain J."/>
            <person name="Poussereau N."/>
            <person name="Quesneville H."/>
            <person name="Rascle C."/>
            <person name="Schumacher J."/>
            <person name="Segurens B."/>
            <person name="Sexton A."/>
            <person name="Silva E."/>
            <person name="Sirven C."/>
            <person name="Soanes D.M."/>
            <person name="Talbot N.J."/>
            <person name="Templeton M."/>
            <person name="Yandava C."/>
            <person name="Yarden O."/>
            <person name="Zeng Q."/>
            <person name="Rollins J.A."/>
            <person name="Lebrun M.-H."/>
            <person name="Dickman M."/>
        </authorList>
    </citation>
    <scope>NUCLEOTIDE SEQUENCE [LARGE SCALE GENOMIC DNA]</scope>
    <source>
        <strain>B05.10</strain>
    </source>
</reference>
<reference key="2">
    <citation type="journal article" date="2012" name="Eukaryot. Cell">
        <title>Genome update of Botrytis cinerea strains B05.10 and T4.</title>
        <authorList>
            <person name="Staats M."/>
            <person name="van Kan J.A.L."/>
        </authorList>
    </citation>
    <scope>NUCLEOTIDE SEQUENCE [LARGE SCALE GENOMIC DNA]</scope>
    <source>
        <strain>B05.10</strain>
    </source>
</reference>
<reference key="3">
    <citation type="journal article" date="2017" name="Mol. Plant Pathol.">
        <title>A gapless genome sequence of the fungus Botrytis cinerea.</title>
        <authorList>
            <person name="van Kan J.A.L."/>
            <person name="Stassen J.H.M."/>
            <person name="Mosbach A."/>
            <person name="van der Lee T.A.J."/>
            <person name="Faino L."/>
            <person name="Farmer A.D."/>
            <person name="Papasotiriou D.G."/>
            <person name="Zhou S."/>
            <person name="Seidl M.F."/>
            <person name="Cottam E."/>
            <person name="Edel D."/>
            <person name="Hahn M."/>
            <person name="Schwartz D.C."/>
            <person name="Dietrich R.A."/>
            <person name="Widdison S."/>
            <person name="Scalliet G."/>
        </authorList>
    </citation>
    <scope>NUCLEOTIDE SEQUENCE [LARGE SCALE GENOMIC DNA]</scope>
    <source>
        <strain>B05.10</strain>
    </source>
</reference>
<reference key="4">
    <citation type="journal article" date="2016" name="New Phytol.">
        <title>Aquaporin8 regulates cellular development and reactive oxygen species production, a critical component of virulence in Botrytis cinerea.</title>
        <authorList>
            <person name="An B."/>
            <person name="Li B."/>
            <person name="Li H."/>
            <person name="Zhang Z."/>
            <person name="Qin G."/>
            <person name="Tian S."/>
        </authorList>
    </citation>
    <scope>FUNCTION</scope>
    <scope>DOMAIN</scope>
    <scope>INDUCTION</scope>
    <scope>DISRUPTION PHENOTYPE</scope>
</reference>
<evidence type="ECO:0000255" key="1"/>
<evidence type="ECO:0000256" key="2">
    <source>
        <dbReference type="SAM" id="MobiDB-lite"/>
    </source>
</evidence>
<evidence type="ECO:0000269" key="3">
    <source>
    </source>
</evidence>
<evidence type="ECO:0000303" key="4">
    <source>
    </source>
</evidence>
<evidence type="ECO:0000305" key="5"/>
<evidence type="ECO:0000305" key="6">
    <source>
    </source>
</evidence>
<accession>A0A384JL97</accession>
<sequence length="462" mass="52106">MTMRSPLTNDHPQPLRASPLSEHDDEIQIRLDDSRYRSFPPPRRVVQRNTPAPIQLQDFEFPKQSHDIPGHYPMIDEIYPDVHPYRTSEDGFVSLTNGDNMAQNKRASRSRPWMQNLQTQDRIQRYKKRRPATKWMKWMNSDWKNHIVAVIGELIGTSLFLFFGYAGIEVAKLQGREPPDLEVLFYISATFGASLMVTAWIFFRISGGLFNPAVTLALAILKAVSPIRAFLLVITQLGASCLAAILVQEIFPKQLDVATTLGSGTSMGQGFVIEAITTAALIFTIIMLAVEKHKATFVAPIGIGLALFVAHMVAVPFTGASLNPARSFGPSAIVWNFPREHWIYWVGPILGAGLAVLFFRLIKLMEYEMANPGQDGDPENDPTQNPELDVAQNAHEREEEVLGLSNGKSWYRDDSSSGSMRRKESVNSFTGGRRSMDRRGDIFRRLDDVEAQWRRQQYRNVV</sequence>
<organism>
    <name type="scientific">Botryotinia fuckeliana (strain B05.10)</name>
    <name type="common">Noble rot fungus</name>
    <name type="synonym">Botrytis cinerea</name>
    <dbReference type="NCBI Taxonomy" id="332648"/>
    <lineage>
        <taxon>Eukaryota</taxon>
        <taxon>Fungi</taxon>
        <taxon>Dikarya</taxon>
        <taxon>Ascomycota</taxon>
        <taxon>Pezizomycotina</taxon>
        <taxon>Leotiomycetes</taxon>
        <taxon>Helotiales</taxon>
        <taxon>Sclerotiniaceae</taxon>
        <taxon>Botrytis</taxon>
    </lineage>
</organism>
<feature type="chain" id="PRO_0000457440" description="Aquaporin-1">
    <location>
        <begin position="1"/>
        <end position="462"/>
    </location>
</feature>
<feature type="topological domain" description="Cytoplasmic" evidence="5">
    <location>
        <begin position="1"/>
        <end position="146"/>
    </location>
</feature>
<feature type="transmembrane region" description="Helical" evidence="1">
    <location>
        <begin position="147"/>
        <end position="167"/>
    </location>
</feature>
<feature type="topological domain" description="Extracellular" evidence="5">
    <location>
        <begin position="168"/>
        <end position="182"/>
    </location>
</feature>
<feature type="transmembrane region" description="Helical" evidence="1">
    <location>
        <begin position="183"/>
        <end position="203"/>
    </location>
</feature>
<feature type="topological domain" description="Cytoplasmic" evidence="5">
    <location>
        <begin position="204"/>
        <end position="229"/>
    </location>
</feature>
<feature type="transmembrane region" description="Helical" evidence="1">
    <location>
        <begin position="230"/>
        <end position="250"/>
    </location>
</feature>
<feature type="topological domain" description="Extracellular" evidence="5">
    <location>
        <begin position="251"/>
        <end position="269"/>
    </location>
</feature>
<feature type="transmembrane region" description="Helical" evidence="1">
    <location>
        <begin position="270"/>
        <end position="290"/>
    </location>
</feature>
<feature type="topological domain" description="Cytoplasmic" evidence="5">
    <location>
        <begin position="291"/>
        <end position="296"/>
    </location>
</feature>
<feature type="transmembrane region" description="Helical" evidence="1">
    <location>
        <begin position="297"/>
        <end position="317"/>
    </location>
</feature>
<feature type="topological domain" description="Extracellular" evidence="5">
    <location>
        <begin position="318"/>
        <end position="341"/>
    </location>
</feature>
<feature type="transmembrane region" description="Helical" evidence="1">
    <location>
        <begin position="342"/>
        <end position="362"/>
    </location>
</feature>
<feature type="topological domain" description="Cytoplasmic" evidence="5">
    <location>
        <begin position="363"/>
        <end position="462"/>
    </location>
</feature>
<feature type="region of interest" description="Disordered" evidence="2">
    <location>
        <begin position="1"/>
        <end position="24"/>
    </location>
</feature>
<feature type="region of interest" description="Disordered" evidence="2">
    <location>
        <begin position="407"/>
        <end position="433"/>
    </location>
</feature>
<feature type="short sequence motif" description="NPA 1" evidence="6">
    <location>
        <begin position="211"/>
        <end position="213"/>
    </location>
</feature>
<feature type="short sequence motif" description="NPA 2" evidence="6">
    <location>
        <begin position="323"/>
        <end position="325"/>
    </location>
</feature>
<feature type="compositionally biased region" description="Polar residues" evidence="2">
    <location>
        <begin position="1"/>
        <end position="11"/>
    </location>
</feature>
<feature type="compositionally biased region" description="Basic and acidic residues" evidence="2">
    <location>
        <begin position="410"/>
        <end position="425"/>
    </location>
</feature>
<name>AQP1_BOTFB</name>
<gene>
    <name evidence="4" type="primary">AQP1</name>
    <name type="ORF">BCIN_06g06680</name>
</gene>
<dbReference type="EMBL" id="CP009810">
    <property type="protein sequence ID" value="ATZ51251.1"/>
    <property type="molecule type" value="Genomic_DNA"/>
</dbReference>
<dbReference type="SMR" id="A0A384JL97"/>
<dbReference type="EnsemblFungi" id="Bcin06g06680.1">
    <property type="protein sequence ID" value="Bcin06p06680.1"/>
    <property type="gene ID" value="Bcin06g06680"/>
</dbReference>
<dbReference type="KEGG" id="bfu:BCIN_06g06680"/>
<dbReference type="VEuPathDB" id="FungiDB:Bcin06g06680"/>
<dbReference type="OrthoDB" id="3222at2759"/>
<dbReference type="Proteomes" id="UP000001798">
    <property type="component" value="Chromosome bcin06"/>
</dbReference>
<dbReference type="GO" id="GO:0005886">
    <property type="term" value="C:plasma membrane"/>
    <property type="evidence" value="ECO:0007669"/>
    <property type="project" value="TreeGrafter"/>
</dbReference>
<dbReference type="GO" id="GO:0015250">
    <property type="term" value="F:water channel activity"/>
    <property type="evidence" value="ECO:0007669"/>
    <property type="project" value="TreeGrafter"/>
</dbReference>
<dbReference type="FunFam" id="1.20.1080.10:FF:000014">
    <property type="entry name" value="Aquaporin 1"/>
    <property type="match status" value="1"/>
</dbReference>
<dbReference type="Gene3D" id="1.20.1080.10">
    <property type="entry name" value="Glycerol uptake facilitator protein"/>
    <property type="match status" value="1"/>
</dbReference>
<dbReference type="InterPro" id="IPR023271">
    <property type="entry name" value="Aquaporin-like"/>
</dbReference>
<dbReference type="InterPro" id="IPR034294">
    <property type="entry name" value="Aquaporin_transptr"/>
</dbReference>
<dbReference type="InterPro" id="IPR000425">
    <property type="entry name" value="MIP"/>
</dbReference>
<dbReference type="PANTHER" id="PTHR19139:SF283">
    <property type="entry name" value="AQUAPORIN"/>
    <property type="match status" value="1"/>
</dbReference>
<dbReference type="PANTHER" id="PTHR19139">
    <property type="entry name" value="AQUAPORIN TRANSPORTER"/>
    <property type="match status" value="1"/>
</dbReference>
<dbReference type="Pfam" id="PF00230">
    <property type="entry name" value="MIP"/>
    <property type="match status" value="1"/>
</dbReference>
<dbReference type="PRINTS" id="PR00783">
    <property type="entry name" value="MINTRINSICP"/>
</dbReference>
<dbReference type="SUPFAM" id="SSF81338">
    <property type="entry name" value="Aquaporin-like"/>
    <property type="match status" value="1"/>
</dbReference>
<proteinExistence type="evidence at transcript level"/>
<comment type="function">
    <text evidence="3 6">Water channel required to facilitate the transport of water across membranes (Probable). Involved in conidiation (PubMed:26527167).</text>
</comment>
<comment type="catalytic activity">
    <reaction evidence="6">
        <text>H2O(in) = H2O(out)</text>
        <dbReference type="Rhea" id="RHEA:29667"/>
        <dbReference type="ChEBI" id="CHEBI:15377"/>
    </reaction>
</comment>
<comment type="subcellular location">
    <subcellularLocation>
        <location evidence="1">Membrane</location>
        <topology evidence="1">Multi-pass membrane protein</topology>
    </subcellularLocation>
</comment>
<comment type="induction">
    <text evidence="3">Expression is higher in conidia than in vegetative hyphae.</text>
</comment>
<comment type="domain">
    <text evidence="6">Aquaporins contain two tandem repeats each containing three membrane-spanning domains and a pore-forming loop with the signature motif Asn-Pro-Ala (NPA).</text>
</comment>
<comment type="disruption phenotype">
    <text evidence="3">Leads to a slight reduction in the vegetative growth rate and delayed conidiation.</text>
</comment>
<comment type="similarity">
    <text evidence="5">Belongs to the MIP/aquaporin (TC 1.A.8) family.</text>
</comment>